<name>RL33_HELPY</name>
<accession>P66217</accession>
<accession>P56055</accession>
<organism>
    <name type="scientific">Helicobacter pylori (strain ATCC 700392 / 26695)</name>
    <name type="common">Campylobacter pylori</name>
    <dbReference type="NCBI Taxonomy" id="85962"/>
    <lineage>
        <taxon>Bacteria</taxon>
        <taxon>Pseudomonadati</taxon>
        <taxon>Campylobacterota</taxon>
        <taxon>Epsilonproteobacteria</taxon>
        <taxon>Campylobacterales</taxon>
        <taxon>Helicobacteraceae</taxon>
        <taxon>Helicobacter</taxon>
    </lineage>
</organism>
<feature type="chain" id="PRO_0000170168" description="Large ribosomal subunit protein bL33">
    <location>
        <begin position="1"/>
        <end position="52"/>
    </location>
</feature>
<dbReference type="EMBL" id="AE000511">
    <property type="protein sequence ID" value="AAD08255.1"/>
    <property type="molecule type" value="Genomic_DNA"/>
</dbReference>
<dbReference type="PIR" id="D64670">
    <property type="entry name" value="D64670"/>
</dbReference>
<dbReference type="RefSeq" id="NP_207996.1">
    <property type="nucleotide sequence ID" value="NC_000915.1"/>
</dbReference>
<dbReference type="RefSeq" id="WP_000865159.1">
    <property type="nucleotide sequence ID" value="NC_018939.1"/>
</dbReference>
<dbReference type="SMR" id="P66217"/>
<dbReference type="FunCoup" id="P66217">
    <property type="interactions" value="342"/>
</dbReference>
<dbReference type="IntAct" id="P66217">
    <property type="interactions" value="1"/>
</dbReference>
<dbReference type="MINT" id="P66217"/>
<dbReference type="STRING" id="85962.HP_1204"/>
<dbReference type="PaxDb" id="85962-C694_06235"/>
<dbReference type="EnsemblBacteria" id="AAD08255">
    <property type="protein sequence ID" value="AAD08255"/>
    <property type="gene ID" value="HP_1204"/>
</dbReference>
<dbReference type="KEGG" id="heo:C694_06235"/>
<dbReference type="KEGG" id="hpy:HP_1204"/>
<dbReference type="PATRIC" id="fig|85962.47.peg.1295"/>
<dbReference type="eggNOG" id="COG0267">
    <property type="taxonomic scope" value="Bacteria"/>
</dbReference>
<dbReference type="InParanoid" id="P66217"/>
<dbReference type="OrthoDB" id="21586at2"/>
<dbReference type="PhylomeDB" id="P66217"/>
<dbReference type="Proteomes" id="UP000000429">
    <property type="component" value="Chromosome"/>
</dbReference>
<dbReference type="GO" id="GO:0005737">
    <property type="term" value="C:cytoplasm"/>
    <property type="evidence" value="ECO:0007669"/>
    <property type="project" value="UniProtKB-ARBA"/>
</dbReference>
<dbReference type="GO" id="GO:1990904">
    <property type="term" value="C:ribonucleoprotein complex"/>
    <property type="evidence" value="ECO:0007669"/>
    <property type="project" value="UniProtKB-KW"/>
</dbReference>
<dbReference type="GO" id="GO:0005840">
    <property type="term" value="C:ribosome"/>
    <property type="evidence" value="ECO:0007669"/>
    <property type="project" value="UniProtKB-KW"/>
</dbReference>
<dbReference type="GO" id="GO:0003735">
    <property type="term" value="F:structural constituent of ribosome"/>
    <property type="evidence" value="ECO:0007669"/>
    <property type="project" value="InterPro"/>
</dbReference>
<dbReference type="GO" id="GO:0006412">
    <property type="term" value="P:translation"/>
    <property type="evidence" value="ECO:0007669"/>
    <property type="project" value="UniProtKB-UniRule"/>
</dbReference>
<dbReference type="Gene3D" id="2.20.28.120">
    <property type="entry name" value="Ribosomal protein L33"/>
    <property type="match status" value="1"/>
</dbReference>
<dbReference type="HAMAP" id="MF_00294">
    <property type="entry name" value="Ribosomal_bL33"/>
    <property type="match status" value="1"/>
</dbReference>
<dbReference type="InterPro" id="IPR001705">
    <property type="entry name" value="Ribosomal_bL33"/>
</dbReference>
<dbReference type="InterPro" id="IPR018264">
    <property type="entry name" value="Ribosomal_bL33_CS"/>
</dbReference>
<dbReference type="InterPro" id="IPR038584">
    <property type="entry name" value="Ribosomal_bL33_sf"/>
</dbReference>
<dbReference type="InterPro" id="IPR011332">
    <property type="entry name" value="Ribosomal_zn-bd"/>
</dbReference>
<dbReference type="NCBIfam" id="NF001764">
    <property type="entry name" value="PRK00504.1"/>
    <property type="match status" value="1"/>
</dbReference>
<dbReference type="NCBIfam" id="NF001860">
    <property type="entry name" value="PRK00595.1"/>
    <property type="match status" value="1"/>
</dbReference>
<dbReference type="NCBIfam" id="TIGR01023">
    <property type="entry name" value="rpmG_bact"/>
    <property type="match status" value="1"/>
</dbReference>
<dbReference type="PANTHER" id="PTHR43168">
    <property type="entry name" value="50S RIBOSOMAL PROTEIN L33, CHLOROPLASTIC"/>
    <property type="match status" value="1"/>
</dbReference>
<dbReference type="PANTHER" id="PTHR43168:SF6">
    <property type="entry name" value="LARGE RIBOSOMAL SUBUNIT PROTEIN BL33A"/>
    <property type="match status" value="1"/>
</dbReference>
<dbReference type="Pfam" id="PF00471">
    <property type="entry name" value="Ribosomal_L33"/>
    <property type="match status" value="1"/>
</dbReference>
<dbReference type="SUPFAM" id="SSF57829">
    <property type="entry name" value="Zn-binding ribosomal proteins"/>
    <property type="match status" value="1"/>
</dbReference>
<dbReference type="PROSITE" id="PS00582">
    <property type="entry name" value="RIBOSOMAL_L33"/>
    <property type="match status" value="1"/>
</dbReference>
<evidence type="ECO:0000305" key="1"/>
<protein>
    <recommendedName>
        <fullName evidence="1">Large ribosomal subunit protein bL33</fullName>
    </recommendedName>
    <alternativeName>
        <fullName>50S ribosomal protein L33</fullName>
    </alternativeName>
</protein>
<keyword id="KW-1185">Reference proteome</keyword>
<keyword id="KW-0687">Ribonucleoprotein</keyword>
<keyword id="KW-0689">Ribosomal protein</keyword>
<reference key="1">
    <citation type="journal article" date="1997" name="Nature">
        <title>The complete genome sequence of the gastric pathogen Helicobacter pylori.</title>
        <authorList>
            <person name="Tomb J.-F."/>
            <person name="White O."/>
            <person name="Kerlavage A.R."/>
            <person name="Clayton R.A."/>
            <person name="Sutton G.G."/>
            <person name="Fleischmann R.D."/>
            <person name="Ketchum K.A."/>
            <person name="Klenk H.-P."/>
            <person name="Gill S.R."/>
            <person name="Dougherty B.A."/>
            <person name="Nelson K.E."/>
            <person name="Quackenbush J."/>
            <person name="Zhou L."/>
            <person name="Kirkness E.F."/>
            <person name="Peterson S.N."/>
            <person name="Loftus B.J."/>
            <person name="Richardson D.L."/>
            <person name="Dodson R.J."/>
            <person name="Khalak H.G."/>
            <person name="Glodek A."/>
            <person name="McKenney K."/>
            <person name="FitzGerald L.M."/>
            <person name="Lee N."/>
            <person name="Adams M.D."/>
            <person name="Hickey E.K."/>
            <person name="Berg D.E."/>
            <person name="Gocayne J.D."/>
            <person name="Utterback T.R."/>
            <person name="Peterson J.D."/>
            <person name="Kelley J.M."/>
            <person name="Cotton M.D."/>
            <person name="Weidman J.F."/>
            <person name="Fujii C."/>
            <person name="Bowman C."/>
            <person name="Watthey L."/>
            <person name="Wallin E."/>
            <person name="Hayes W.S."/>
            <person name="Borodovsky M."/>
            <person name="Karp P.D."/>
            <person name="Smith H.O."/>
            <person name="Fraser C.M."/>
            <person name="Venter J.C."/>
        </authorList>
    </citation>
    <scope>NUCLEOTIDE SEQUENCE [LARGE SCALE GENOMIC DNA]</scope>
    <source>
        <strain>ATCC 700392 / 26695</strain>
    </source>
</reference>
<gene>
    <name type="primary">rpmG</name>
    <name type="ordered locus">HP_1204</name>
</gene>
<proteinExistence type="inferred from homology"/>
<sequence length="52" mass="6066">MKVKIGLKCSDCEDINYSTTKNAKTNTEKLELKKFCPRENKHTLHKEIKLKS</sequence>
<comment type="similarity">
    <text evidence="1">Belongs to the bacterial ribosomal protein bL33 family.</text>
</comment>